<name>METXS_DECAR</name>
<proteinExistence type="inferred from homology"/>
<feature type="chain" id="PRO_0000231869" description="Homoserine O-succinyltransferase">
    <location>
        <begin position="1"/>
        <end position="374"/>
    </location>
</feature>
<feature type="domain" description="AB hydrolase-1" evidence="1">
    <location>
        <begin position="47"/>
        <end position="357"/>
    </location>
</feature>
<feature type="active site" description="Nucleophile" evidence="1">
    <location>
        <position position="153"/>
    </location>
</feature>
<feature type="active site" evidence="1">
    <location>
        <position position="318"/>
    </location>
</feature>
<feature type="active site" evidence="1">
    <location>
        <position position="351"/>
    </location>
</feature>
<feature type="binding site" evidence="1">
    <location>
        <position position="223"/>
    </location>
    <ligand>
        <name>substrate</name>
    </ligand>
</feature>
<feature type="binding site" evidence="1">
    <location>
        <position position="352"/>
    </location>
    <ligand>
        <name>substrate</name>
    </ligand>
</feature>
<feature type="site" description="Important for acyl-CoA specificity" evidence="1">
    <location>
        <position position="320"/>
    </location>
</feature>
<organism>
    <name type="scientific">Dechloromonas aromatica (strain RCB)</name>
    <dbReference type="NCBI Taxonomy" id="159087"/>
    <lineage>
        <taxon>Bacteria</taxon>
        <taxon>Pseudomonadati</taxon>
        <taxon>Pseudomonadota</taxon>
        <taxon>Betaproteobacteria</taxon>
        <taxon>Rhodocyclales</taxon>
        <taxon>Azonexaceae</taxon>
        <taxon>Dechloromonas</taxon>
    </lineage>
</organism>
<comment type="function">
    <text evidence="1">Transfers a succinyl group from succinyl-CoA to L-homoserine, forming succinyl-L-homoserine.</text>
</comment>
<comment type="catalytic activity">
    <reaction evidence="1">
        <text>L-homoserine + succinyl-CoA = O-succinyl-L-homoserine + CoA</text>
        <dbReference type="Rhea" id="RHEA:22008"/>
        <dbReference type="ChEBI" id="CHEBI:57287"/>
        <dbReference type="ChEBI" id="CHEBI:57292"/>
        <dbReference type="ChEBI" id="CHEBI:57476"/>
        <dbReference type="ChEBI" id="CHEBI:57661"/>
        <dbReference type="EC" id="2.3.1.46"/>
    </reaction>
</comment>
<comment type="pathway">
    <text evidence="1">Amino-acid biosynthesis; L-methionine biosynthesis via de novo pathway; O-succinyl-L-homoserine from L-homoserine: step 1/1.</text>
</comment>
<comment type="subunit">
    <text evidence="1">Homodimer.</text>
</comment>
<comment type="subcellular location">
    <subcellularLocation>
        <location evidence="1">Cytoplasm</location>
    </subcellularLocation>
</comment>
<comment type="similarity">
    <text evidence="1">Belongs to the AB hydrolase superfamily. MetX family.</text>
</comment>
<accession>Q47JU2</accession>
<gene>
    <name evidence="1" type="primary">metXS</name>
    <name type="ordered locus">Daro_0130</name>
</gene>
<evidence type="ECO:0000255" key="1">
    <source>
        <dbReference type="HAMAP-Rule" id="MF_00296"/>
    </source>
</evidence>
<sequence length="374" mass="41191">MPGQSVGAVQPQRAHFDQPLHLRSGGVLPAYDLVYETYGTLNAAKSNAILVCHALSGHHHVAGHYADQPDNIGWWDNIVGPGRPLDTDKFFIVGLNNLGGCHGSTGPSSLNPATGKPWGADFPIVAVNDWVHAQARLADLLGIDSWAAVMGGSLGGMQALRWSITFPERVRNAIVIAAAPKLSAQNIAFNDVARQAILTDPDFHGGHYYEHNTRPVRGLRLARMLGHITYLSDDQMGEKFGRELRNSAFSFGYGVEFEVESYLRYQGDKFAGYFDANTYLLMTKALDYFDPSREDDGNLTATMARTQANFLIASFTTDWRFTPARSKEIVAALLANGRNVSYAEIDLNFGHDSFLMEDAHYHGVVDAYLRNIKL</sequence>
<protein>
    <recommendedName>
        <fullName evidence="1">Homoserine O-succinyltransferase</fullName>
        <shortName evidence="1">HST</shortName>
        <ecNumber evidence="1">2.3.1.46</ecNumber>
    </recommendedName>
    <alternativeName>
        <fullName evidence="1">Homoserine transsuccinylase</fullName>
        <shortName evidence="1">HTS</shortName>
    </alternativeName>
</protein>
<dbReference type="EC" id="2.3.1.46" evidence="1"/>
<dbReference type="EMBL" id="CP000089">
    <property type="protein sequence ID" value="AAZ44889.1"/>
    <property type="molecule type" value="Genomic_DNA"/>
</dbReference>
<dbReference type="SMR" id="Q47JU2"/>
<dbReference type="STRING" id="159087.Daro_0130"/>
<dbReference type="ESTHER" id="decar-metx">
    <property type="family name" value="Homoserine_transacetylase"/>
</dbReference>
<dbReference type="KEGG" id="dar:Daro_0130"/>
<dbReference type="eggNOG" id="COG2021">
    <property type="taxonomic scope" value="Bacteria"/>
</dbReference>
<dbReference type="HOGENOM" id="CLU_028760_1_2_4"/>
<dbReference type="OrthoDB" id="9800754at2"/>
<dbReference type="UniPathway" id="UPA00051">
    <property type="reaction ID" value="UER00075"/>
</dbReference>
<dbReference type="GO" id="GO:0005737">
    <property type="term" value="C:cytoplasm"/>
    <property type="evidence" value="ECO:0007669"/>
    <property type="project" value="UniProtKB-SubCell"/>
</dbReference>
<dbReference type="GO" id="GO:0004414">
    <property type="term" value="F:homoserine O-acetyltransferase activity"/>
    <property type="evidence" value="ECO:0007669"/>
    <property type="project" value="TreeGrafter"/>
</dbReference>
<dbReference type="GO" id="GO:0008899">
    <property type="term" value="F:homoserine O-succinyltransferase activity"/>
    <property type="evidence" value="ECO:0007669"/>
    <property type="project" value="UniProtKB-UniRule"/>
</dbReference>
<dbReference type="GO" id="GO:0009092">
    <property type="term" value="P:homoserine metabolic process"/>
    <property type="evidence" value="ECO:0007669"/>
    <property type="project" value="TreeGrafter"/>
</dbReference>
<dbReference type="GO" id="GO:0009086">
    <property type="term" value="P:methionine biosynthetic process"/>
    <property type="evidence" value="ECO:0007669"/>
    <property type="project" value="UniProtKB-UniRule"/>
</dbReference>
<dbReference type="FunFam" id="1.10.1740.110:FF:000001">
    <property type="entry name" value="Homoserine O-acetyltransferase"/>
    <property type="match status" value="1"/>
</dbReference>
<dbReference type="Gene3D" id="1.10.1740.110">
    <property type="match status" value="1"/>
</dbReference>
<dbReference type="Gene3D" id="3.40.50.1820">
    <property type="entry name" value="alpha/beta hydrolase"/>
    <property type="match status" value="1"/>
</dbReference>
<dbReference type="HAMAP" id="MF_00296">
    <property type="entry name" value="MetX_acyltransf"/>
    <property type="match status" value="1"/>
</dbReference>
<dbReference type="InterPro" id="IPR000073">
    <property type="entry name" value="AB_hydrolase_1"/>
</dbReference>
<dbReference type="InterPro" id="IPR029058">
    <property type="entry name" value="AB_hydrolase_fold"/>
</dbReference>
<dbReference type="InterPro" id="IPR008220">
    <property type="entry name" value="HAT_MetX-like"/>
</dbReference>
<dbReference type="NCBIfam" id="TIGR01392">
    <property type="entry name" value="homoserO_Ac_trn"/>
    <property type="match status" value="1"/>
</dbReference>
<dbReference type="NCBIfam" id="NF001209">
    <property type="entry name" value="PRK00175.1"/>
    <property type="match status" value="1"/>
</dbReference>
<dbReference type="PANTHER" id="PTHR32268">
    <property type="entry name" value="HOMOSERINE O-ACETYLTRANSFERASE"/>
    <property type="match status" value="1"/>
</dbReference>
<dbReference type="PANTHER" id="PTHR32268:SF11">
    <property type="entry name" value="HOMOSERINE O-ACETYLTRANSFERASE"/>
    <property type="match status" value="1"/>
</dbReference>
<dbReference type="Pfam" id="PF00561">
    <property type="entry name" value="Abhydrolase_1"/>
    <property type="match status" value="1"/>
</dbReference>
<dbReference type="PIRSF" id="PIRSF000443">
    <property type="entry name" value="Homoser_Ac_trans"/>
    <property type="match status" value="1"/>
</dbReference>
<dbReference type="SUPFAM" id="SSF53474">
    <property type="entry name" value="alpha/beta-Hydrolases"/>
    <property type="match status" value="1"/>
</dbReference>
<reference key="1">
    <citation type="journal article" date="2009" name="BMC Genomics">
        <title>Metabolic analysis of the soil microbe Dechloromonas aromatica str. RCB: indications of a surprisingly complex life-style and cryptic anaerobic pathways for aromatic degradation.</title>
        <authorList>
            <person name="Salinero K.K."/>
            <person name="Keller K."/>
            <person name="Feil W.S."/>
            <person name="Feil H."/>
            <person name="Trong S."/>
            <person name="Di Bartolo G."/>
            <person name="Lapidus A."/>
        </authorList>
    </citation>
    <scope>NUCLEOTIDE SEQUENCE [LARGE SCALE GENOMIC DNA]</scope>
    <source>
        <strain>RCB</strain>
    </source>
</reference>
<keyword id="KW-0012">Acyltransferase</keyword>
<keyword id="KW-0028">Amino-acid biosynthesis</keyword>
<keyword id="KW-0963">Cytoplasm</keyword>
<keyword id="KW-0486">Methionine biosynthesis</keyword>
<keyword id="KW-0808">Transferase</keyword>